<feature type="chain" id="PRO_0000319399" description="Cellulose synthase-like protein E2">
    <location>
        <begin position="1"/>
        <end position="745"/>
    </location>
</feature>
<feature type="transmembrane region" description="Helical" evidence="1">
    <location>
        <begin position="29"/>
        <end position="49"/>
    </location>
</feature>
<feature type="transmembrane region" description="Helical" evidence="1">
    <location>
        <begin position="66"/>
        <end position="86"/>
    </location>
</feature>
<feature type="transmembrane region" description="Helical" evidence="1">
    <location>
        <begin position="541"/>
        <end position="561"/>
    </location>
</feature>
<feature type="transmembrane region" description="Helical" evidence="1">
    <location>
        <begin position="568"/>
        <end position="588"/>
    </location>
</feature>
<feature type="transmembrane region" description="Helical" evidence="1">
    <location>
        <begin position="658"/>
        <end position="678"/>
    </location>
</feature>
<feature type="transmembrane region" description="Helical" evidence="1">
    <location>
        <begin position="686"/>
        <end position="706"/>
    </location>
</feature>
<feature type="transmembrane region" description="Helical" evidence="1">
    <location>
        <begin position="723"/>
        <end position="743"/>
    </location>
</feature>
<feature type="region of interest" description="Disordered" evidence="2">
    <location>
        <begin position="1"/>
        <end position="20"/>
    </location>
</feature>
<feature type="compositionally biased region" description="Gly residues" evidence="2">
    <location>
        <begin position="1"/>
        <end position="14"/>
    </location>
</feature>
<feature type="active site" evidence="1">
    <location>
        <position position="155"/>
    </location>
</feature>
<feature type="active site" evidence="1">
    <location>
        <position position="458"/>
    </location>
</feature>
<feature type="sequence conflict" description="In Ref. 1; AAL25130." evidence="3" ref="1">
    <original>G</original>
    <variation>S</variation>
    <location>
        <position position="686"/>
    </location>
</feature>
<name>CSLE2_ORYSJ</name>
<accession>Q0DXZ1</accession>
<accession>B7ERT8</accession>
<accession>Q944E3</accession>
<comment type="function">
    <text>Thought to be a Golgi-localized beta-glycan synthase that polymerize the backbones of noncellulosic polysaccharides (hemicelluloses) of plant cell wall.</text>
</comment>
<comment type="subcellular location">
    <subcellularLocation>
        <location evidence="3">Golgi apparatus membrane</location>
        <topology evidence="3">Multi-pass membrane protein</topology>
    </subcellularLocation>
</comment>
<comment type="similarity">
    <text evidence="3">Belongs to the glycosyltransferase 2 family. Plant cellulose synthase-like E subfamily.</text>
</comment>
<sequence>MAGSGGGVVSGGRQRGPPLFATEKPGRMAMAAYRVSAATVFAGVLLIWLYRATHLPPGGGDGVRRWAWLGMLAAELWFGFYWVLTLSVRWCPVYRRTFKDRLAQSYSEDELPSVDIFVCTADPTAEPPMLVISTVLSVMAYDYLPEKLNIYLSDDAGSVLTFYVLCEASEFAKHWIPFCKKYKVEPRSPAAYFAKVASPPDGCGPKEWFTMKELYKDMTDRVNSVVNSGRIPEVPRCHSRGFSQWNENFTSSDHPSIVQILIDSNKQKAVDIDGNALPTLVYMAREKKPQKQHHFKAGSLNALIRVSSVISNSPIIMNVDCDMYSNNSESIRDALCFFLDEEQGQDIGFVQYPQNFENVVHNDIYGHPINVVNELDHPCLDGWGGMCYYGTGCFHRREALCGRIYSQEYKEDWTRVAGRTEDANELEEMGRSLVTCTYEHNTIWGIEKGVRYGCPLEDVTTGLQIQCRGWRSVYYNPKRKGFLGMTPTSLGQILVLYKRWTEGFLQISLSRYSPFLLGHGKIKLGLQMGYSVCGFWAVNSFPTLYYVTIPSLCFLNGISLFPEKTSPWFIPFAYVMVAAYSCSLAESLQCGDSAVEWWNAQRMWLIRRITSYLLATIDTFRRILGISESGFNLTVKVTDLQALERYKKGMMEFGSFSAMFVILTTVALLNLACMVLGISRVLLQEGPGGLETLFLQAVLCVLIVAINSPVYEALFLRRDKGSLPASVARVSICFVLPLCILSICK</sequence>
<evidence type="ECO:0000255" key="1"/>
<evidence type="ECO:0000256" key="2">
    <source>
        <dbReference type="SAM" id="MobiDB-lite"/>
    </source>
</evidence>
<evidence type="ECO:0000305" key="3"/>
<reference key="1">
    <citation type="journal article" date="2002" name="Plant Physiol.">
        <title>Cellulose synthase-like genes of rice.</title>
        <authorList>
            <person name="Hazen S.P."/>
            <person name="Scott-Craig J.S."/>
            <person name="Walton J.D."/>
        </authorList>
    </citation>
    <scope>NUCLEOTIDE SEQUENCE [GENOMIC DNA]</scope>
</reference>
<reference key="2">
    <citation type="journal article" date="2005" name="Nature">
        <title>The map-based sequence of the rice genome.</title>
        <authorList>
            <consortium name="International rice genome sequencing project (IRGSP)"/>
        </authorList>
    </citation>
    <scope>NUCLEOTIDE SEQUENCE [LARGE SCALE GENOMIC DNA]</scope>
    <source>
        <strain>cv. Nipponbare</strain>
    </source>
</reference>
<reference key="3">
    <citation type="journal article" date="2008" name="Nucleic Acids Res.">
        <title>The rice annotation project database (RAP-DB): 2008 update.</title>
        <authorList>
            <consortium name="The rice annotation project (RAP)"/>
        </authorList>
    </citation>
    <scope>GENOME REANNOTATION</scope>
    <source>
        <strain>cv. Nipponbare</strain>
    </source>
</reference>
<reference key="4">
    <citation type="journal article" date="2013" name="Rice">
        <title>Improvement of the Oryza sativa Nipponbare reference genome using next generation sequence and optical map data.</title>
        <authorList>
            <person name="Kawahara Y."/>
            <person name="de la Bastide M."/>
            <person name="Hamilton J.P."/>
            <person name="Kanamori H."/>
            <person name="McCombie W.R."/>
            <person name="Ouyang S."/>
            <person name="Schwartz D.C."/>
            <person name="Tanaka T."/>
            <person name="Wu J."/>
            <person name="Zhou S."/>
            <person name="Childs K.L."/>
            <person name="Davidson R.M."/>
            <person name="Lin H."/>
            <person name="Quesada-Ocampo L."/>
            <person name="Vaillancourt B."/>
            <person name="Sakai H."/>
            <person name="Lee S.S."/>
            <person name="Kim J."/>
            <person name="Numa H."/>
            <person name="Itoh T."/>
            <person name="Buell C.R."/>
            <person name="Matsumoto T."/>
        </authorList>
    </citation>
    <scope>GENOME REANNOTATION</scope>
    <source>
        <strain>cv. Nipponbare</strain>
    </source>
</reference>
<reference key="5">
    <citation type="journal article" date="2003" name="Science">
        <title>Collection, mapping, and annotation of over 28,000 cDNA clones from japonica rice.</title>
        <authorList>
            <consortium name="The rice full-length cDNA consortium"/>
        </authorList>
    </citation>
    <scope>NUCLEOTIDE SEQUENCE [LARGE SCALE MRNA]</scope>
    <source>
        <strain>cv. Nipponbare</strain>
    </source>
</reference>
<keyword id="KW-0961">Cell wall biogenesis/degradation</keyword>
<keyword id="KW-0328">Glycosyltransferase</keyword>
<keyword id="KW-0333">Golgi apparatus</keyword>
<keyword id="KW-0472">Membrane</keyword>
<keyword id="KW-1185">Reference proteome</keyword>
<keyword id="KW-0808">Transferase</keyword>
<keyword id="KW-0812">Transmembrane</keyword>
<keyword id="KW-1133">Transmembrane helix</keyword>
<gene>
    <name type="primary">CSLE2</name>
    <name type="ordered locus">Os02g0725300</name>
    <name type="ordered locus">LOC_Os02g49332</name>
</gene>
<organism>
    <name type="scientific">Oryza sativa subsp. japonica</name>
    <name type="common">Rice</name>
    <dbReference type="NCBI Taxonomy" id="39947"/>
    <lineage>
        <taxon>Eukaryota</taxon>
        <taxon>Viridiplantae</taxon>
        <taxon>Streptophyta</taxon>
        <taxon>Embryophyta</taxon>
        <taxon>Tracheophyta</taxon>
        <taxon>Spermatophyta</taxon>
        <taxon>Magnoliopsida</taxon>
        <taxon>Liliopsida</taxon>
        <taxon>Poales</taxon>
        <taxon>Poaceae</taxon>
        <taxon>BOP clade</taxon>
        <taxon>Oryzoideae</taxon>
        <taxon>Oryzeae</taxon>
        <taxon>Oryzinae</taxon>
        <taxon>Oryza</taxon>
        <taxon>Oryza sativa</taxon>
    </lineage>
</organism>
<protein>
    <recommendedName>
        <fullName>Cellulose synthase-like protein E2</fullName>
        <ecNumber>2.4.1.-</ecNumber>
    </recommendedName>
    <alternativeName>
        <fullName>OsCslE2</fullName>
    </alternativeName>
</protein>
<dbReference type="EC" id="2.4.1.-"/>
<dbReference type="EMBL" id="AF432501">
    <property type="protein sequence ID" value="AAL25130.1"/>
    <property type="molecule type" value="Genomic_DNA"/>
</dbReference>
<dbReference type="EMBL" id="AP008208">
    <property type="protein sequence ID" value="BAF09897.1"/>
    <property type="molecule type" value="Genomic_DNA"/>
</dbReference>
<dbReference type="EMBL" id="AP014958">
    <property type="protein sequence ID" value="BAS80689.1"/>
    <property type="molecule type" value="Genomic_DNA"/>
</dbReference>
<dbReference type="EMBL" id="AK101487">
    <property type="protein sequence ID" value="BAG95085.1"/>
    <property type="molecule type" value="mRNA"/>
</dbReference>
<dbReference type="RefSeq" id="XP_015625192.1">
    <property type="nucleotide sequence ID" value="XM_015769706.1"/>
</dbReference>
<dbReference type="RefSeq" id="XP_015625193.1">
    <property type="nucleotide sequence ID" value="XM_015769707.1"/>
</dbReference>
<dbReference type="SMR" id="Q0DXZ1"/>
<dbReference type="FunCoup" id="Q0DXZ1">
    <property type="interactions" value="4"/>
</dbReference>
<dbReference type="STRING" id="39947.Q0DXZ1"/>
<dbReference type="CAZy" id="GT2">
    <property type="family name" value="Glycosyltransferase Family 2"/>
</dbReference>
<dbReference type="PaxDb" id="39947-Q0DXZ1"/>
<dbReference type="EnsemblPlants" id="Os02t0725300-01">
    <property type="protein sequence ID" value="Os02t0725300-01"/>
    <property type="gene ID" value="Os02g0725300"/>
</dbReference>
<dbReference type="Gramene" id="Os02t0725300-01">
    <property type="protein sequence ID" value="Os02t0725300-01"/>
    <property type="gene ID" value="Os02g0725300"/>
</dbReference>
<dbReference type="KEGG" id="dosa:Os02g0725300"/>
<dbReference type="eggNOG" id="ENOG502QS7H">
    <property type="taxonomic scope" value="Eukaryota"/>
</dbReference>
<dbReference type="HOGENOM" id="CLU_001418_3_3_1"/>
<dbReference type="InParanoid" id="Q0DXZ1"/>
<dbReference type="OMA" id="PQKQHHF"/>
<dbReference type="OrthoDB" id="1929172at2759"/>
<dbReference type="Proteomes" id="UP000000763">
    <property type="component" value="Chromosome 2"/>
</dbReference>
<dbReference type="Proteomes" id="UP000059680">
    <property type="component" value="Chromosome 2"/>
</dbReference>
<dbReference type="ExpressionAtlas" id="Q0DXZ1">
    <property type="expression patterns" value="baseline and differential"/>
</dbReference>
<dbReference type="GO" id="GO:0000139">
    <property type="term" value="C:Golgi membrane"/>
    <property type="evidence" value="ECO:0007669"/>
    <property type="project" value="UniProtKB-SubCell"/>
</dbReference>
<dbReference type="GO" id="GO:0005886">
    <property type="term" value="C:plasma membrane"/>
    <property type="evidence" value="ECO:0000318"/>
    <property type="project" value="GO_Central"/>
</dbReference>
<dbReference type="GO" id="GO:0016760">
    <property type="term" value="F:cellulose synthase (UDP-forming) activity"/>
    <property type="evidence" value="ECO:0007669"/>
    <property type="project" value="InterPro"/>
</dbReference>
<dbReference type="GO" id="GO:0016759">
    <property type="term" value="F:cellulose synthase activity"/>
    <property type="evidence" value="ECO:0000318"/>
    <property type="project" value="GO_Central"/>
</dbReference>
<dbReference type="GO" id="GO:0071555">
    <property type="term" value="P:cell wall organization"/>
    <property type="evidence" value="ECO:0007669"/>
    <property type="project" value="UniProtKB-KW"/>
</dbReference>
<dbReference type="GO" id="GO:0030244">
    <property type="term" value="P:cellulose biosynthetic process"/>
    <property type="evidence" value="ECO:0000318"/>
    <property type="project" value="GO_Central"/>
</dbReference>
<dbReference type="GO" id="GO:0009833">
    <property type="term" value="P:plant-type primary cell wall biogenesis"/>
    <property type="evidence" value="ECO:0000318"/>
    <property type="project" value="GO_Central"/>
</dbReference>
<dbReference type="FunFam" id="3.90.550.10:FF:000112">
    <property type="entry name" value="Cellulose synthase-like protein E1"/>
    <property type="match status" value="1"/>
</dbReference>
<dbReference type="Gene3D" id="3.90.550.10">
    <property type="entry name" value="Spore Coat Polysaccharide Biosynthesis Protein SpsA, Chain A"/>
    <property type="match status" value="1"/>
</dbReference>
<dbReference type="InterPro" id="IPR005150">
    <property type="entry name" value="Cellulose_synth"/>
</dbReference>
<dbReference type="InterPro" id="IPR029044">
    <property type="entry name" value="Nucleotide-diphossugar_trans"/>
</dbReference>
<dbReference type="PANTHER" id="PTHR13301">
    <property type="entry name" value="X-BOX TRANSCRIPTION FACTOR-RELATED"/>
    <property type="match status" value="1"/>
</dbReference>
<dbReference type="Pfam" id="PF03552">
    <property type="entry name" value="Cellulose_synt"/>
    <property type="match status" value="2"/>
</dbReference>
<proteinExistence type="evidence at transcript level"/>